<accession>A3RGC1</accession>
<dbReference type="EMBL" id="EF405627">
    <property type="protein sequence ID" value="ABN80095.1"/>
    <property type="molecule type" value="mRNA"/>
</dbReference>
<dbReference type="RefSeq" id="NP_001090883.1">
    <property type="nucleotide sequence ID" value="NM_001097414.1"/>
</dbReference>
<dbReference type="SMR" id="A3RGC1"/>
<dbReference type="FunCoup" id="A3RGC1">
    <property type="interactions" value="242"/>
</dbReference>
<dbReference type="STRING" id="9823.ENSSSCP00000055650"/>
<dbReference type="BindingDB" id="A3RGC1"/>
<dbReference type="ChEMBL" id="CHEMBL5304"/>
<dbReference type="DrugCentral" id="A3RGC1"/>
<dbReference type="PaxDb" id="9823-ENSSSCP00000019810"/>
<dbReference type="Ensembl" id="ENSSSCT00000032274.3">
    <property type="protein sequence ID" value="ENSSSCP00000019810.3"/>
    <property type="gene ID" value="ENSSSCG00000020864.4"/>
</dbReference>
<dbReference type="Ensembl" id="ENSSSCT00015054074.1">
    <property type="protein sequence ID" value="ENSSSCP00015021680.1"/>
    <property type="gene ID" value="ENSSSCG00015040270.1"/>
</dbReference>
<dbReference type="Ensembl" id="ENSSSCT00025006974.1">
    <property type="protein sequence ID" value="ENSSSCP00025002860.1"/>
    <property type="gene ID" value="ENSSSCG00025005173.1"/>
</dbReference>
<dbReference type="Ensembl" id="ENSSSCT00030012596.1">
    <property type="protein sequence ID" value="ENSSSCP00030005651.1"/>
    <property type="gene ID" value="ENSSSCG00030009207.1"/>
</dbReference>
<dbReference type="Ensembl" id="ENSSSCT00035071430.1">
    <property type="protein sequence ID" value="ENSSSCP00035028984.1"/>
    <property type="gene ID" value="ENSSSCG00035053536.1"/>
</dbReference>
<dbReference type="Ensembl" id="ENSSSCT00040018729.1">
    <property type="protein sequence ID" value="ENSSSCP00040007652.1"/>
    <property type="gene ID" value="ENSSSCG00040013967.1"/>
</dbReference>
<dbReference type="Ensembl" id="ENSSSCT00045000388.1">
    <property type="protein sequence ID" value="ENSSSCP00045000190.1"/>
    <property type="gene ID" value="ENSSSCG00045000290.1"/>
</dbReference>
<dbReference type="Ensembl" id="ENSSSCT00055012508.1">
    <property type="protein sequence ID" value="ENSSSCP00055009853.1"/>
    <property type="gene ID" value="ENSSSCG00055006377.1"/>
</dbReference>
<dbReference type="Ensembl" id="ENSSSCT00055012543.1">
    <property type="protein sequence ID" value="ENSSSCP00055009877.1"/>
    <property type="gene ID" value="ENSSSCG00055006377.1"/>
</dbReference>
<dbReference type="Ensembl" id="ENSSSCT00060049451.1">
    <property type="protein sequence ID" value="ENSSSCP00060021161.1"/>
    <property type="gene ID" value="ENSSSCG00060036478.1"/>
</dbReference>
<dbReference type="Ensembl" id="ENSSSCT00065086338.1">
    <property type="protein sequence ID" value="ENSSSCP00065037748.1"/>
    <property type="gene ID" value="ENSSSCG00065062920.1"/>
</dbReference>
<dbReference type="Ensembl" id="ENSSSCT00105021218">
    <property type="protein sequence ID" value="ENSSSCP00105015337"/>
    <property type="gene ID" value="ENSSSCG00105010579"/>
</dbReference>
<dbReference type="Ensembl" id="ENSSSCT00110043092">
    <property type="protein sequence ID" value="ENSSSCP00110030241"/>
    <property type="gene ID" value="ENSSSCG00110022281"/>
</dbReference>
<dbReference type="Ensembl" id="ENSSSCT00115021774">
    <property type="protein sequence ID" value="ENSSSCP00115020619"/>
    <property type="gene ID" value="ENSSSCG00115012589"/>
</dbReference>
<dbReference type="Ensembl" id="ENSSSCT00130046149">
    <property type="protein sequence ID" value="ENSSSCP00130032366"/>
    <property type="gene ID" value="ENSSSCG00130023889"/>
</dbReference>
<dbReference type="GeneID" id="396628"/>
<dbReference type="KEGG" id="ssc:396628"/>
<dbReference type="CTD" id="7421"/>
<dbReference type="VGNC" id="VGNC:94814">
    <property type="gene designation" value="VDR"/>
</dbReference>
<dbReference type="eggNOG" id="KOG3575">
    <property type="taxonomic scope" value="Eukaryota"/>
</dbReference>
<dbReference type="GeneTree" id="ENSGT00940000155473"/>
<dbReference type="HOGENOM" id="CLU_007368_12_0_1"/>
<dbReference type="InParanoid" id="A3RGC1"/>
<dbReference type="OrthoDB" id="6352325at2759"/>
<dbReference type="TreeFam" id="TF316304"/>
<dbReference type="Reactome" id="R-SSC-196791">
    <property type="pathway name" value="Vitamin D (calciferol) metabolism"/>
</dbReference>
<dbReference type="Reactome" id="R-SSC-383280">
    <property type="pathway name" value="Nuclear Receptor transcription pathway"/>
</dbReference>
<dbReference type="Reactome" id="R-SSC-4090294">
    <property type="pathway name" value="SUMOylation of intracellular receptors"/>
</dbReference>
<dbReference type="PRO" id="PR:A3RGC1"/>
<dbReference type="Proteomes" id="UP000008227">
    <property type="component" value="Chromosome 5"/>
</dbReference>
<dbReference type="Proteomes" id="UP000314985">
    <property type="component" value="Unplaced"/>
</dbReference>
<dbReference type="Proteomes" id="UP000694570">
    <property type="component" value="Unplaced"/>
</dbReference>
<dbReference type="Proteomes" id="UP000694571">
    <property type="component" value="Unplaced"/>
</dbReference>
<dbReference type="Proteomes" id="UP000694720">
    <property type="component" value="Unplaced"/>
</dbReference>
<dbReference type="Proteomes" id="UP000694722">
    <property type="component" value="Unplaced"/>
</dbReference>
<dbReference type="Proteomes" id="UP000694723">
    <property type="component" value="Unplaced"/>
</dbReference>
<dbReference type="Proteomes" id="UP000694724">
    <property type="component" value="Unplaced"/>
</dbReference>
<dbReference type="Proteomes" id="UP000694725">
    <property type="component" value="Unplaced"/>
</dbReference>
<dbReference type="Proteomes" id="UP000694726">
    <property type="component" value="Unplaced"/>
</dbReference>
<dbReference type="Proteomes" id="UP000694727">
    <property type="component" value="Unplaced"/>
</dbReference>
<dbReference type="Proteomes" id="UP000694728">
    <property type="component" value="Unplaced"/>
</dbReference>
<dbReference type="Bgee" id="ENSSSCG00000020864">
    <property type="expression patterns" value="Expressed in adult mammalian kidney and 25 other cell types or tissues"/>
</dbReference>
<dbReference type="ExpressionAtlas" id="A3RGC1">
    <property type="expression patterns" value="baseline and differential"/>
</dbReference>
<dbReference type="GO" id="GO:0000785">
    <property type="term" value="C:chromatin"/>
    <property type="evidence" value="ECO:0007669"/>
    <property type="project" value="Ensembl"/>
</dbReference>
<dbReference type="GO" id="GO:0005829">
    <property type="term" value="C:cytosol"/>
    <property type="evidence" value="ECO:0007669"/>
    <property type="project" value="Ensembl"/>
</dbReference>
<dbReference type="GO" id="GO:0005654">
    <property type="term" value="C:nucleoplasm"/>
    <property type="evidence" value="ECO:0007669"/>
    <property type="project" value="Ensembl"/>
</dbReference>
<dbReference type="GO" id="GO:0005634">
    <property type="term" value="C:nucleus"/>
    <property type="evidence" value="ECO:0000318"/>
    <property type="project" value="GO_Central"/>
</dbReference>
<dbReference type="GO" id="GO:0043235">
    <property type="term" value="C:receptor complex"/>
    <property type="evidence" value="ECO:0007669"/>
    <property type="project" value="Ensembl"/>
</dbReference>
<dbReference type="GO" id="GO:0090575">
    <property type="term" value="C:RNA polymerase II transcription regulator complex"/>
    <property type="evidence" value="ECO:0007669"/>
    <property type="project" value="Ensembl"/>
</dbReference>
<dbReference type="GO" id="GO:0038186">
    <property type="term" value="F:bile acid nuclear receptor activity"/>
    <property type="evidence" value="ECO:0007669"/>
    <property type="project" value="Ensembl"/>
</dbReference>
<dbReference type="GO" id="GO:1902098">
    <property type="term" value="F:calcitriol binding"/>
    <property type="evidence" value="ECO:0007669"/>
    <property type="project" value="Ensembl"/>
</dbReference>
<dbReference type="GO" id="GO:1902121">
    <property type="term" value="F:lithocholic acid binding"/>
    <property type="evidence" value="ECO:0007669"/>
    <property type="project" value="Ensembl"/>
</dbReference>
<dbReference type="GO" id="GO:0004879">
    <property type="term" value="F:nuclear receptor activity"/>
    <property type="evidence" value="ECO:0000250"/>
    <property type="project" value="UniProtKB"/>
</dbReference>
<dbReference type="GO" id="GO:0046965">
    <property type="term" value="F:nuclear retinoid X receptor binding"/>
    <property type="evidence" value="ECO:0007669"/>
    <property type="project" value="Ensembl"/>
</dbReference>
<dbReference type="GO" id="GO:0003707">
    <property type="term" value="F:nuclear steroid receptor activity"/>
    <property type="evidence" value="ECO:0007669"/>
    <property type="project" value="Ensembl"/>
</dbReference>
<dbReference type="GO" id="GO:0000978">
    <property type="term" value="F:RNA polymerase II cis-regulatory region sequence-specific DNA binding"/>
    <property type="evidence" value="ECO:0000318"/>
    <property type="project" value="GO_Central"/>
</dbReference>
<dbReference type="GO" id="GO:0070644">
    <property type="term" value="F:vitamin D response element binding"/>
    <property type="evidence" value="ECO:0007669"/>
    <property type="project" value="Ensembl"/>
</dbReference>
<dbReference type="GO" id="GO:0008270">
    <property type="term" value="F:zinc ion binding"/>
    <property type="evidence" value="ECO:0007669"/>
    <property type="project" value="UniProtKB-KW"/>
</dbReference>
<dbReference type="GO" id="GO:0060057">
    <property type="term" value="P:apoptotic process involved in mammary gland involution"/>
    <property type="evidence" value="ECO:0007669"/>
    <property type="project" value="Ensembl"/>
</dbReference>
<dbReference type="GO" id="GO:0006816">
    <property type="term" value="P:calcium ion transport"/>
    <property type="evidence" value="ECO:0007669"/>
    <property type="project" value="Ensembl"/>
</dbReference>
<dbReference type="GO" id="GO:0030154">
    <property type="term" value="P:cell differentiation"/>
    <property type="evidence" value="ECO:0000318"/>
    <property type="project" value="GO_Central"/>
</dbReference>
<dbReference type="GO" id="GO:0000902">
    <property type="term" value="P:cell morphogenesis"/>
    <property type="evidence" value="ECO:0007669"/>
    <property type="project" value="Ensembl"/>
</dbReference>
<dbReference type="GO" id="GO:0046697">
    <property type="term" value="P:decidualization"/>
    <property type="evidence" value="ECO:0007669"/>
    <property type="project" value="Ensembl"/>
</dbReference>
<dbReference type="GO" id="GO:0050892">
    <property type="term" value="P:intestinal absorption"/>
    <property type="evidence" value="ECO:0007669"/>
    <property type="project" value="Ensembl"/>
</dbReference>
<dbReference type="GO" id="GO:0006874">
    <property type="term" value="P:intracellular calcium ion homeostasis"/>
    <property type="evidence" value="ECO:0007669"/>
    <property type="project" value="Ensembl"/>
</dbReference>
<dbReference type="GO" id="GO:0030522">
    <property type="term" value="P:intracellular receptor signaling pathway"/>
    <property type="evidence" value="ECO:0000318"/>
    <property type="project" value="GO_Central"/>
</dbReference>
<dbReference type="GO" id="GO:0007595">
    <property type="term" value="P:lactation"/>
    <property type="evidence" value="ECO:0007669"/>
    <property type="project" value="Ensembl"/>
</dbReference>
<dbReference type="GO" id="GO:0060745">
    <property type="term" value="P:mammary gland branching involved in pregnancy"/>
    <property type="evidence" value="ECO:0007669"/>
    <property type="project" value="Ensembl"/>
</dbReference>
<dbReference type="GO" id="GO:0042789">
    <property type="term" value="P:mRNA transcription by RNA polymerase II"/>
    <property type="evidence" value="ECO:0007669"/>
    <property type="project" value="Ensembl"/>
</dbReference>
<dbReference type="GO" id="GO:0010839">
    <property type="term" value="P:negative regulation of keratinocyte proliferation"/>
    <property type="evidence" value="ECO:0007669"/>
    <property type="project" value="Ensembl"/>
</dbReference>
<dbReference type="GO" id="GO:0000122">
    <property type="term" value="P:negative regulation of transcription by RNA polymerase II"/>
    <property type="evidence" value="ECO:0000318"/>
    <property type="project" value="GO_Central"/>
</dbReference>
<dbReference type="GO" id="GO:0038185">
    <property type="term" value="P:nuclear receptor-mediated bile acid signaling pathway"/>
    <property type="evidence" value="ECO:0007669"/>
    <property type="project" value="Ensembl"/>
</dbReference>
<dbReference type="GO" id="GO:0035435">
    <property type="term" value="P:phosphate ion transmembrane transport"/>
    <property type="evidence" value="ECO:0007669"/>
    <property type="project" value="Ensembl"/>
</dbReference>
<dbReference type="GO" id="GO:0060058">
    <property type="term" value="P:positive regulation of apoptotic process involved in mammary gland involution"/>
    <property type="evidence" value="ECO:0007669"/>
    <property type="project" value="Ensembl"/>
</dbReference>
<dbReference type="GO" id="GO:0010628">
    <property type="term" value="P:positive regulation of gene expression"/>
    <property type="evidence" value="ECO:0007669"/>
    <property type="project" value="Ensembl"/>
</dbReference>
<dbReference type="GO" id="GO:0045618">
    <property type="term" value="P:positive regulation of keratinocyte differentiation"/>
    <property type="evidence" value="ECO:0007669"/>
    <property type="project" value="Ensembl"/>
</dbReference>
<dbReference type="GO" id="GO:0045944">
    <property type="term" value="P:positive regulation of transcription by RNA polymerase II"/>
    <property type="evidence" value="ECO:0000318"/>
    <property type="project" value="GO_Central"/>
</dbReference>
<dbReference type="GO" id="GO:0070564">
    <property type="term" value="P:positive regulation of vitamin D receptor signaling pathway"/>
    <property type="evidence" value="ECO:0007669"/>
    <property type="project" value="Ensembl"/>
</dbReference>
<dbReference type="GO" id="GO:1903412">
    <property type="term" value="P:response to bile acid"/>
    <property type="evidence" value="ECO:0007669"/>
    <property type="project" value="Ensembl"/>
</dbReference>
<dbReference type="GO" id="GO:0048384">
    <property type="term" value="P:retinoic acid receptor signaling pathway"/>
    <property type="evidence" value="ECO:0007669"/>
    <property type="project" value="Ensembl"/>
</dbReference>
<dbReference type="GO" id="GO:0001501">
    <property type="term" value="P:skeletal system development"/>
    <property type="evidence" value="ECO:0007669"/>
    <property type="project" value="Ensembl"/>
</dbReference>
<dbReference type="GO" id="GO:0070561">
    <property type="term" value="P:vitamin D receptor signaling pathway"/>
    <property type="evidence" value="ECO:0000250"/>
    <property type="project" value="UniProtKB"/>
</dbReference>
<dbReference type="CDD" id="cd06955">
    <property type="entry name" value="NR_DBD_VDR"/>
    <property type="match status" value="1"/>
</dbReference>
<dbReference type="CDD" id="cd06933">
    <property type="entry name" value="NR_LBD_VDR"/>
    <property type="match status" value="1"/>
</dbReference>
<dbReference type="FunFam" id="3.30.50.10:FF:000023">
    <property type="entry name" value="Vitamin D3 receptor"/>
    <property type="match status" value="1"/>
</dbReference>
<dbReference type="FunFam" id="1.10.565.10:FF:000021">
    <property type="entry name" value="Vitamin D3 receptor B"/>
    <property type="match status" value="1"/>
</dbReference>
<dbReference type="Gene3D" id="3.30.50.10">
    <property type="entry name" value="Erythroid Transcription Factor GATA-1, subunit A"/>
    <property type="match status" value="1"/>
</dbReference>
<dbReference type="Gene3D" id="1.10.565.10">
    <property type="entry name" value="Retinoid X Receptor"/>
    <property type="match status" value="1"/>
</dbReference>
<dbReference type="InterPro" id="IPR042153">
    <property type="entry name" value="DBD_VDR"/>
</dbReference>
<dbReference type="InterPro" id="IPR035500">
    <property type="entry name" value="NHR-like_dom_sf"/>
</dbReference>
<dbReference type="InterPro" id="IPR000536">
    <property type="entry name" value="Nucl_hrmn_rcpt_lig-bd"/>
</dbReference>
<dbReference type="InterPro" id="IPR050234">
    <property type="entry name" value="Nuclear_hormone_rcpt_NR1"/>
</dbReference>
<dbReference type="InterPro" id="IPR001723">
    <property type="entry name" value="Nuclear_hrmn_rcpt"/>
</dbReference>
<dbReference type="InterPro" id="IPR000324">
    <property type="entry name" value="VitD_rcpt"/>
</dbReference>
<dbReference type="InterPro" id="IPR001628">
    <property type="entry name" value="Znf_hrmn_rcpt"/>
</dbReference>
<dbReference type="InterPro" id="IPR013088">
    <property type="entry name" value="Znf_NHR/GATA"/>
</dbReference>
<dbReference type="PANTHER" id="PTHR24082">
    <property type="entry name" value="NUCLEAR HORMONE RECEPTOR"/>
    <property type="match status" value="1"/>
</dbReference>
<dbReference type="PANTHER" id="PTHR24082:SF38">
    <property type="entry name" value="VITAMIN D3 RECEPTOR"/>
    <property type="match status" value="1"/>
</dbReference>
<dbReference type="Pfam" id="PF00104">
    <property type="entry name" value="Hormone_recep"/>
    <property type="match status" value="1"/>
</dbReference>
<dbReference type="Pfam" id="PF00105">
    <property type="entry name" value="zf-C4"/>
    <property type="match status" value="1"/>
</dbReference>
<dbReference type="PRINTS" id="PR00398">
    <property type="entry name" value="STRDHORMONER"/>
</dbReference>
<dbReference type="PRINTS" id="PR00047">
    <property type="entry name" value="STROIDFINGER"/>
</dbReference>
<dbReference type="PRINTS" id="PR00350">
    <property type="entry name" value="VITAMINDR"/>
</dbReference>
<dbReference type="SMART" id="SM00430">
    <property type="entry name" value="HOLI"/>
    <property type="match status" value="1"/>
</dbReference>
<dbReference type="SMART" id="SM00399">
    <property type="entry name" value="ZnF_C4"/>
    <property type="match status" value="1"/>
</dbReference>
<dbReference type="SUPFAM" id="SSF57716">
    <property type="entry name" value="Glucocorticoid receptor-like (DNA-binding domain)"/>
    <property type="match status" value="1"/>
</dbReference>
<dbReference type="SUPFAM" id="SSF48508">
    <property type="entry name" value="Nuclear receptor ligand-binding domain"/>
    <property type="match status" value="1"/>
</dbReference>
<dbReference type="PROSITE" id="PS51843">
    <property type="entry name" value="NR_LBD"/>
    <property type="match status" value="1"/>
</dbReference>
<dbReference type="PROSITE" id="PS00031">
    <property type="entry name" value="NUCLEAR_REC_DBD_1"/>
    <property type="match status" value="1"/>
</dbReference>
<dbReference type="PROSITE" id="PS51030">
    <property type="entry name" value="NUCLEAR_REC_DBD_2"/>
    <property type="match status" value="1"/>
</dbReference>
<name>VDR_PIG</name>
<keyword id="KW-0963">Cytoplasm</keyword>
<keyword id="KW-0238">DNA-binding</keyword>
<keyword id="KW-0479">Metal-binding</keyword>
<keyword id="KW-0539">Nucleus</keyword>
<keyword id="KW-0675">Receptor</keyword>
<keyword id="KW-1185">Reference proteome</keyword>
<keyword id="KW-0804">Transcription</keyword>
<keyword id="KW-0805">Transcription regulation</keyword>
<keyword id="KW-0832">Ubl conjugation</keyword>
<keyword id="KW-0862">Zinc</keyword>
<keyword id="KW-0863">Zinc-finger</keyword>
<comment type="function">
    <text evidence="1 2">Nuclear receptor for calcitriol, the active form of vitamin D3 which mediates the action of this vitamin on cells. Enters the nucleus upon vitamin D3 binding where it forms heterodimers with the retinoid X receptor/RXR. The VDR-RXR heterodimers bind to specific response elements on DNA and activate the transcription of vitamin D3-responsive target genes (By similarity). Plays a central role in calcium homeostasis (By similarity). Also functions as a receptor for the secondary bile acid lithocholic acid (LCA) and its metabolites (By similarity).</text>
</comment>
<comment type="subunit">
    <text evidence="1 3">Homodimer in the absence of bound vitamin D3. Heterodimer with RXRA after vitamin D3 binding. Interacts with MED1, NCOA1, NCOA2, NCOA3 and NCOA6 coactivators, leading to a strong increase of transcription of target genes. Interacts with the corepressor NCOR1. Interacts with SNW1. Interacts with IRX4, the interaction does not affect its transactivation activity (By similarity). Interacts with CRY1 (By similarity). Interacts with CRY2 in a ligand-dependent manner (By similarity).</text>
</comment>
<comment type="subcellular location">
    <subcellularLocation>
        <location evidence="1 4">Nucleus</location>
    </subcellularLocation>
    <subcellularLocation>
        <location evidence="1">Cytoplasm</location>
    </subcellularLocation>
    <text evidence="1">Localizes mainly to the nucleus. Translocated into the nucleus via both ligand-dependent and ligand-independent pathways; ligand-independent nuclear translocation is mediated by IPO4.</text>
</comment>
<comment type="domain">
    <text evidence="1">Composed of three domains: a modulating N-terminal domain, a DNA-binding domain and a C-terminal ligand-binding domain.</text>
</comment>
<comment type="domain">
    <text evidence="1">The 9aaTAD motif is a transactivation domain present in a large number of yeast and animal transcription factors.</text>
</comment>
<comment type="PTM">
    <text evidence="1">Ubiquitinated by UBR5, leading to its degradation: UBR5 specifically recognizes and binds ligand-bound VDR when it is not associated with coactivators (NCOAs). In presence of NCOAs, the UBR5-degron is not accessible, preventing its ubiquitination and degradation.</text>
</comment>
<comment type="similarity">
    <text evidence="7">Belongs to the nuclear hormone receptor family. NR1 subfamily.</text>
</comment>
<reference key="1">
    <citation type="submission" date="2007-01" db="EMBL/GenBank/DDBJ databases">
        <title>Vitamin D receptor characterization.</title>
        <authorList>
            <person name="Fernandez A.I."/>
            <person name="Silio L."/>
            <person name="Rodriguez C."/>
            <person name="Ovilo C."/>
        </authorList>
    </citation>
    <scope>NUCLEOTIDE SEQUENCE [MRNA]</scope>
</reference>
<evidence type="ECO:0000250" key="1">
    <source>
        <dbReference type="UniProtKB" id="P11473"/>
    </source>
</evidence>
<evidence type="ECO:0000250" key="2">
    <source>
        <dbReference type="UniProtKB" id="P13053"/>
    </source>
</evidence>
<evidence type="ECO:0000250" key="3">
    <source>
        <dbReference type="UniProtKB" id="P48281"/>
    </source>
</evidence>
<evidence type="ECO:0000255" key="4">
    <source>
        <dbReference type="PROSITE-ProRule" id="PRU00407"/>
    </source>
</evidence>
<evidence type="ECO:0000255" key="5">
    <source>
        <dbReference type="PROSITE-ProRule" id="PRU01189"/>
    </source>
</evidence>
<evidence type="ECO:0000256" key="6">
    <source>
        <dbReference type="SAM" id="MobiDB-lite"/>
    </source>
</evidence>
<evidence type="ECO:0000305" key="7"/>
<sequence length="427" mass="48128">MEATAASTSLPDPGDFDRNVPRICGVCGDRATGFHFNAMTCEGCKGFFRRSMKRKALFTCPFNGDCRITKDNRRHCQACRLKRCVDIGMMKEFILTDEEVQRKREMILKRKEEEALKDSLRPKLSEEQQRIIAILLDAHHKTYDPTYADFGQFRPPVRGDEEEGTLPSRSSSAHAPSFSGSSSSSCSDQYTSSPDTMEPASFSHLDLSEEDSDDPSVTLDLSQLSMLPHLADLVSYSIQKVIGFAKMIPGFRDLTAEDQIVLLKSSAIEVIMLRSNQSFTMDDMSWTCGSRDYKYQVSDVAKAGHSLELIEPLIKFQVGLKKLNLHEEEHVLLMAICIVSPDRPGVQDPTLIEAIQDRLSNTLQTYIRCRHPPPGSHLLYAKMIQKLADLRSLNEEHSKQYRCLSFQPECSMKLTPLVLEVFGNEIS</sequence>
<proteinExistence type="evidence at transcript level"/>
<protein>
    <recommendedName>
        <fullName>Vitamin D3 receptor</fullName>
        <shortName>VDR</shortName>
    </recommendedName>
    <alternativeName>
        <fullName>1,25-dihydroxyvitamin D3 receptor</fullName>
    </alternativeName>
    <alternativeName>
        <fullName>Nuclear receptor subfamily 1 group I member 1</fullName>
    </alternativeName>
</protein>
<gene>
    <name type="primary">VDR</name>
    <name type="synonym">NR1I1</name>
</gene>
<organism>
    <name type="scientific">Sus scrofa</name>
    <name type="common">Pig</name>
    <dbReference type="NCBI Taxonomy" id="9823"/>
    <lineage>
        <taxon>Eukaryota</taxon>
        <taxon>Metazoa</taxon>
        <taxon>Chordata</taxon>
        <taxon>Craniata</taxon>
        <taxon>Vertebrata</taxon>
        <taxon>Euteleostomi</taxon>
        <taxon>Mammalia</taxon>
        <taxon>Eutheria</taxon>
        <taxon>Laurasiatheria</taxon>
        <taxon>Artiodactyla</taxon>
        <taxon>Suina</taxon>
        <taxon>Suidae</taxon>
        <taxon>Sus</taxon>
    </lineage>
</organism>
<feature type="chain" id="PRO_0000337877" description="Vitamin D3 receptor">
    <location>
        <begin position="1"/>
        <end position="427"/>
    </location>
</feature>
<feature type="domain" description="NR LBD" evidence="5">
    <location>
        <begin position="127"/>
        <end position="423"/>
    </location>
</feature>
<feature type="DNA-binding region" description="Nuclear receptor" evidence="4">
    <location>
        <begin position="21"/>
        <end position="96"/>
    </location>
</feature>
<feature type="zinc finger region" description="NR C4-type" evidence="4">
    <location>
        <begin position="24"/>
        <end position="44"/>
    </location>
</feature>
<feature type="zinc finger region" description="NR C4-type" evidence="4">
    <location>
        <begin position="60"/>
        <end position="79"/>
    </location>
</feature>
<feature type="region of interest" description="Hinge" evidence="1">
    <location>
        <begin position="97"/>
        <end position="126"/>
    </location>
</feature>
<feature type="region of interest" description="Disordered" evidence="6">
    <location>
        <begin position="149"/>
        <end position="201"/>
    </location>
</feature>
<feature type="region of interest" description="Interaction with coactivator LXXLL motif" evidence="2">
    <location>
        <begin position="246"/>
        <end position="264"/>
    </location>
</feature>
<feature type="short sequence motif" description="9aaTAD" evidence="1">
    <location>
        <begin position="416"/>
        <end position="424"/>
    </location>
</feature>
<feature type="compositionally biased region" description="Low complexity" evidence="6">
    <location>
        <begin position="168"/>
        <end position="193"/>
    </location>
</feature>
<feature type="binding site" evidence="1">
    <location>
        <position position="24"/>
    </location>
    <ligand>
        <name>Zn(2+)</name>
        <dbReference type="ChEBI" id="CHEBI:29105"/>
        <label>1</label>
    </ligand>
</feature>
<feature type="binding site" evidence="1">
    <location>
        <position position="27"/>
    </location>
    <ligand>
        <name>Zn(2+)</name>
        <dbReference type="ChEBI" id="CHEBI:29105"/>
        <label>1</label>
    </ligand>
</feature>
<feature type="binding site" evidence="1">
    <location>
        <position position="41"/>
    </location>
    <ligand>
        <name>Zn(2+)</name>
        <dbReference type="ChEBI" id="CHEBI:29105"/>
        <label>1</label>
    </ligand>
</feature>
<feature type="binding site" evidence="1">
    <location>
        <position position="44"/>
    </location>
    <ligand>
        <name>Zn(2+)</name>
        <dbReference type="ChEBI" id="CHEBI:29105"/>
        <label>1</label>
    </ligand>
</feature>
<feature type="binding site" evidence="1">
    <location>
        <position position="60"/>
    </location>
    <ligand>
        <name>Zn(2+)</name>
        <dbReference type="ChEBI" id="CHEBI:29105"/>
        <label>2</label>
    </ligand>
</feature>
<feature type="binding site" evidence="1">
    <location>
        <position position="66"/>
    </location>
    <ligand>
        <name>Zn(2+)</name>
        <dbReference type="ChEBI" id="CHEBI:29105"/>
        <label>2</label>
    </ligand>
</feature>
<feature type="binding site" evidence="1">
    <location>
        <position position="76"/>
    </location>
    <ligand>
        <name>Zn(2+)</name>
        <dbReference type="ChEBI" id="CHEBI:29105"/>
        <label>2</label>
    </ligand>
</feature>
<feature type="binding site" evidence="1">
    <location>
        <position position="79"/>
    </location>
    <ligand>
        <name>Zn(2+)</name>
        <dbReference type="ChEBI" id="CHEBI:29105"/>
        <label>2</label>
    </ligand>
</feature>
<feature type="binding site" evidence="1">
    <location>
        <position position="143"/>
    </location>
    <ligand>
        <name>calcitriol</name>
        <dbReference type="ChEBI" id="CHEBI:17823"/>
    </ligand>
</feature>
<feature type="binding site" evidence="1">
    <location>
        <position position="237"/>
    </location>
    <ligand>
        <name>calcitriol</name>
        <dbReference type="ChEBI" id="CHEBI:17823"/>
    </ligand>
</feature>
<feature type="binding site" evidence="1">
    <location>
        <position position="274"/>
    </location>
    <ligand>
        <name>calcitriol</name>
        <dbReference type="ChEBI" id="CHEBI:17823"/>
    </ligand>
</feature>
<feature type="binding site" evidence="1">
    <location>
        <position position="278"/>
    </location>
    <ligand>
        <name>calcitriol</name>
        <dbReference type="ChEBI" id="CHEBI:17823"/>
    </ligand>
</feature>
<feature type="binding site" evidence="1">
    <location>
        <position position="305"/>
    </location>
    <ligand>
        <name>calcitriol</name>
        <dbReference type="ChEBI" id="CHEBI:17823"/>
    </ligand>
</feature>
<feature type="binding site" evidence="1">
    <location>
        <position position="397"/>
    </location>
    <ligand>
        <name>calcitriol</name>
        <dbReference type="ChEBI" id="CHEBI:17823"/>
    </ligand>
</feature>